<name>TPO5_YEAST</name>
<gene>
    <name type="primary">TPO5</name>
    <name type="ordered locus">YKL174C</name>
    <name type="ORF">YKL639</name>
</gene>
<organism>
    <name type="scientific">Saccharomyces cerevisiae (strain ATCC 204508 / S288c)</name>
    <name type="common">Baker's yeast</name>
    <dbReference type="NCBI Taxonomy" id="559292"/>
    <lineage>
        <taxon>Eukaryota</taxon>
        <taxon>Fungi</taxon>
        <taxon>Dikarya</taxon>
        <taxon>Ascomycota</taxon>
        <taxon>Saccharomycotina</taxon>
        <taxon>Saccharomycetes</taxon>
        <taxon>Saccharomycetales</taxon>
        <taxon>Saccharomycetaceae</taxon>
        <taxon>Saccharomyces</taxon>
    </lineage>
</organism>
<reference key="1">
    <citation type="journal article" date="1994" name="Yeast">
        <title>Sequencing and analysis of a 20.5 kb DNA segment located on the left arm of yeast chromosome XI.</title>
        <authorList>
            <person name="Vandenbol M."/>
            <person name="Bolle P.-A."/>
            <person name="Dion C."/>
            <person name="Portetelle D."/>
            <person name="Hilger F."/>
        </authorList>
    </citation>
    <scope>NUCLEOTIDE SEQUENCE [GENOMIC DNA]</scope>
    <source>
        <strain>ATCC 204508 / S288c</strain>
    </source>
</reference>
<reference key="2">
    <citation type="journal article" date="1994" name="Nature">
        <title>Complete DNA sequence of yeast chromosome XI.</title>
        <authorList>
            <person name="Dujon B."/>
            <person name="Alexandraki D."/>
            <person name="Andre B."/>
            <person name="Ansorge W."/>
            <person name="Baladron V."/>
            <person name="Ballesta J.P.G."/>
            <person name="Banrevi A."/>
            <person name="Bolle P.-A."/>
            <person name="Bolotin-Fukuhara M."/>
            <person name="Bossier P."/>
            <person name="Bou G."/>
            <person name="Boyer J."/>
            <person name="Buitrago M.J."/>
            <person name="Cheret G."/>
            <person name="Colleaux L."/>
            <person name="Daignan-Fornier B."/>
            <person name="del Rey F."/>
            <person name="Dion C."/>
            <person name="Domdey H."/>
            <person name="Duesterhoeft A."/>
            <person name="Duesterhus S."/>
            <person name="Entian K.-D."/>
            <person name="Erfle H."/>
            <person name="Esteban P.F."/>
            <person name="Feldmann H."/>
            <person name="Fernandes L."/>
            <person name="Fobo G.M."/>
            <person name="Fritz C."/>
            <person name="Fukuhara H."/>
            <person name="Gabel C."/>
            <person name="Gaillon L."/>
            <person name="Garcia-Cantalejo J.M."/>
            <person name="Garcia-Ramirez J.J."/>
            <person name="Gent M.E."/>
            <person name="Ghazvini M."/>
            <person name="Goffeau A."/>
            <person name="Gonzalez A."/>
            <person name="Grothues D."/>
            <person name="Guerreiro P."/>
            <person name="Hegemann J.H."/>
            <person name="Hewitt N."/>
            <person name="Hilger F."/>
            <person name="Hollenberg C.P."/>
            <person name="Horaitis O."/>
            <person name="Indge K.J."/>
            <person name="Jacquier A."/>
            <person name="James C.M."/>
            <person name="Jauniaux J.-C."/>
            <person name="Jimenez A."/>
            <person name="Keuchel H."/>
            <person name="Kirchrath L."/>
            <person name="Kleine K."/>
            <person name="Koetter P."/>
            <person name="Legrain P."/>
            <person name="Liebl S."/>
            <person name="Louis E.J."/>
            <person name="Maia e Silva A."/>
            <person name="Marck C."/>
            <person name="Monnier A.-L."/>
            <person name="Moestl D."/>
            <person name="Mueller S."/>
            <person name="Obermaier B."/>
            <person name="Oliver S.G."/>
            <person name="Pallier C."/>
            <person name="Pascolo S."/>
            <person name="Pfeiffer F."/>
            <person name="Philippsen P."/>
            <person name="Planta R.J."/>
            <person name="Pohl F.M."/>
            <person name="Pohl T.M."/>
            <person name="Poehlmann R."/>
            <person name="Portetelle D."/>
            <person name="Purnelle B."/>
            <person name="Puzos V."/>
            <person name="Ramezani Rad M."/>
            <person name="Rasmussen S.W."/>
            <person name="Remacha M.A."/>
            <person name="Revuelta J.L."/>
            <person name="Richard G.-F."/>
            <person name="Rieger M."/>
            <person name="Rodrigues-Pousada C."/>
            <person name="Rose M."/>
            <person name="Rupp T."/>
            <person name="Santos M.A."/>
            <person name="Schwager C."/>
            <person name="Sensen C."/>
            <person name="Skala J."/>
            <person name="Soares H."/>
            <person name="Sor F."/>
            <person name="Stegemann J."/>
            <person name="Tettelin H."/>
            <person name="Thierry A."/>
            <person name="Tzermia M."/>
            <person name="Urrestarazu L.A."/>
            <person name="van Dyck L."/>
            <person name="van Vliet-Reedijk J.C."/>
            <person name="Valens M."/>
            <person name="Vandenbol M."/>
            <person name="Vilela C."/>
            <person name="Vissers S."/>
            <person name="von Wettstein D."/>
            <person name="Voss H."/>
            <person name="Wiemann S."/>
            <person name="Xu G."/>
            <person name="Zimmermann J."/>
            <person name="Haasemann M."/>
            <person name="Becker I."/>
            <person name="Mewes H.-W."/>
        </authorList>
    </citation>
    <scope>NUCLEOTIDE SEQUENCE [LARGE SCALE GENOMIC DNA]</scope>
    <source>
        <strain>ATCC 204508 / S288c</strain>
    </source>
</reference>
<reference key="3">
    <citation type="journal article" date="2014" name="G3 (Bethesda)">
        <title>The reference genome sequence of Saccharomyces cerevisiae: Then and now.</title>
        <authorList>
            <person name="Engel S.R."/>
            <person name="Dietrich F.S."/>
            <person name="Fisk D.G."/>
            <person name="Binkley G."/>
            <person name="Balakrishnan R."/>
            <person name="Costanzo M.C."/>
            <person name="Dwight S.S."/>
            <person name="Hitz B.C."/>
            <person name="Karra K."/>
            <person name="Nash R.S."/>
            <person name="Weng S."/>
            <person name="Wong E.D."/>
            <person name="Lloyd P."/>
            <person name="Skrzypek M.S."/>
            <person name="Miyasato S.R."/>
            <person name="Simison M."/>
            <person name="Cherry J.M."/>
        </authorList>
    </citation>
    <scope>GENOME REANNOTATION</scope>
    <source>
        <strain>ATCC 204508 / S288c</strain>
    </source>
</reference>
<reference key="4">
    <citation type="journal article" date="2005" name="J. Biol. Chem.">
        <title>Excretion of putrescine and spermidine by the protein encoded by YKL174c (TPO5) in Saccharomyces cerevisiae.</title>
        <authorList>
            <person name="Tachihara K."/>
            <person name="Uemura T."/>
            <person name="Kashiwagi K."/>
            <person name="Igarashi K."/>
        </authorList>
    </citation>
    <scope>FUNCTION</scope>
    <scope>SUBCELLULAR LOCATION</scope>
</reference>
<reference key="5">
    <citation type="journal article" date="2006" name="Proc. Natl. Acad. Sci. U.S.A.">
        <title>A global topology map of the Saccharomyces cerevisiae membrane proteome.</title>
        <authorList>
            <person name="Kim H."/>
            <person name="Melen K."/>
            <person name="Oesterberg M."/>
            <person name="von Heijne G."/>
        </authorList>
    </citation>
    <scope>TOPOLOGY [LARGE SCALE ANALYSIS]</scope>
    <source>
        <strain>ATCC 208353 / W303-1A</strain>
    </source>
</reference>
<reference key="6">
    <citation type="journal article" date="2008" name="Mol. Cell. Proteomics">
        <title>A multidimensional chromatography technology for in-depth phosphoproteome analysis.</title>
        <authorList>
            <person name="Albuquerque C.P."/>
            <person name="Smolka M.B."/>
            <person name="Payne S.H."/>
            <person name="Bafna V."/>
            <person name="Eng J."/>
            <person name="Zhou H."/>
        </authorList>
    </citation>
    <scope>PHOSPHORYLATION [LARGE SCALE ANALYSIS] AT SER-569</scope>
    <scope>IDENTIFICATION BY MASS SPECTROMETRY [LARGE SCALE ANALYSIS]</scope>
</reference>
<reference key="7">
    <citation type="journal article" date="2009" name="Science">
        <title>Global analysis of Cdk1 substrate phosphorylation sites provides insights into evolution.</title>
        <authorList>
            <person name="Holt L.J."/>
            <person name="Tuch B.B."/>
            <person name="Villen J."/>
            <person name="Johnson A.D."/>
            <person name="Gygi S.P."/>
            <person name="Morgan D.O."/>
        </authorList>
    </citation>
    <scope>IDENTIFICATION BY MASS SPECTROMETRY [LARGE SCALE ANALYSIS]</scope>
</reference>
<reference key="8">
    <citation type="journal article" date="2012" name="Proc. Natl. Acad. Sci. U.S.A.">
        <title>N-terminal acetylome analyses and functional insights of the N-terminal acetyltransferase NatB.</title>
        <authorList>
            <person name="Van Damme P."/>
            <person name="Lasa M."/>
            <person name="Polevoda B."/>
            <person name="Gazquez C."/>
            <person name="Elosegui-Artola A."/>
            <person name="Kim D.S."/>
            <person name="De Juan-Pardo E."/>
            <person name="Demeyer K."/>
            <person name="Hole K."/>
            <person name="Larrea E."/>
            <person name="Timmerman E."/>
            <person name="Prieto J."/>
            <person name="Arnesen T."/>
            <person name="Sherman F."/>
            <person name="Gevaert K."/>
            <person name="Aldabe R."/>
        </authorList>
    </citation>
    <scope>IDENTIFICATION BY MASS SPECTROMETRY [LARGE SCALE ANALYSIS]</scope>
</reference>
<evidence type="ECO:0000255" key="1"/>
<evidence type="ECO:0000256" key="2">
    <source>
        <dbReference type="SAM" id="MobiDB-lite"/>
    </source>
</evidence>
<evidence type="ECO:0000269" key="3">
    <source>
    </source>
</evidence>
<evidence type="ECO:0000305" key="4"/>
<evidence type="ECO:0007744" key="5">
    <source>
    </source>
</evidence>
<dbReference type="EMBL" id="Z26878">
    <property type="protein sequence ID" value="CAA81512.1"/>
    <property type="molecule type" value="Genomic_DNA"/>
</dbReference>
<dbReference type="EMBL" id="Z28174">
    <property type="protein sequence ID" value="CAA82016.1"/>
    <property type="molecule type" value="Genomic_DNA"/>
</dbReference>
<dbReference type="EMBL" id="BK006944">
    <property type="protein sequence ID" value="DAA08992.1"/>
    <property type="molecule type" value="Genomic_DNA"/>
</dbReference>
<dbReference type="PIR" id="S38004">
    <property type="entry name" value="S38004"/>
</dbReference>
<dbReference type="RefSeq" id="NP_012747.1">
    <property type="nucleotide sequence ID" value="NM_001179740.1"/>
</dbReference>
<dbReference type="SMR" id="P36029"/>
<dbReference type="BioGRID" id="33964">
    <property type="interactions" value="65"/>
</dbReference>
<dbReference type="DIP" id="DIP-4038N"/>
<dbReference type="FunCoup" id="P36029">
    <property type="interactions" value="35"/>
</dbReference>
<dbReference type="IntAct" id="P36029">
    <property type="interactions" value="3"/>
</dbReference>
<dbReference type="MINT" id="P36029"/>
<dbReference type="STRING" id="4932.YKL174C"/>
<dbReference type="TCDB" id="2.A.3.4.5">
    <property type="family name" value="the amino acid-polyamine-organocation (apc) family"/>
</dbReference>
<dbReference type="iPTMnet" id="P36029"/>
<dbReference type="PaxDb" id="4932-YKL174C"/>
<dbReference type="PeptideAtlas" id="P36029"/>
<dbReference type="TopDownProteomics" id="P36029"/>
<dbReference type="EnsemblFungi" id="YKL174C_mRNA">
    <property type="protein sequence ID" value="YKL174C"/>
    <property type="gene ID" value="YKL174C"/>
</dbReference>
<dbReference type="GeneID" id="853680"/>
<dbReference type="KEGG" id="sce:YKL174C"/>
<dbReference type="AGR" id="SGD:S000001657"/>
<dbReference type="SGD" id="S000001657">
    <property type="gene designation" value="TPO5"/>
</dbReference>
<dbReference type="VEuPathDB" id="FungiDB:YKL174C"/>
<dbReference type="eggNOG" id="KOG1289">
    <property type="taxonomic scope" value="Eukaryota"/>
</dbReference>
<dbReference type="HOGENOM" id="CLU_004495_5_3_1"/>
<dbReference type="InParanoid" id="P36029"/>
<dbReference type="OMA" id="LLMAQYT"/>
<dbReference type="OrthoDB" id="3257095at2759"/>
<dbReference type="BioCyc" id="YEAST:G3O-31941-MONOMER"/>
<dbReference type="BioGRID-ORCS" id="853680">
    <property type="hits" value="1 hit in 10 CRISPR screens"/>
</dbReference>
<dbReference type="PRO" id="PR:P36029"/>
<dbReference type="Proteomes" id="UP000002311">
    <property type="component" value="Chromosome XI"/>
</dbReference>
<dbReference type="RNAct" id="P36029">
    <property type="molecule type" value="protein"/>
</dbReference>
<dbReference type="GO" id="GO:0005783">
    <property type="term" value="C:endoplasmic reticulum"/>
    <property type="evidence" value="ECO:0007005"/>
    <property type="project" value="SGD"/>
</dbReference>
<dbReference type="GO" id="GO:0005794">
    <property type="term" value="C:Golgi apparatus"/>
    <property type="evidence" value="ECO:0000314"/>
    <property type="project" value="SGD"/>
</dbReference>
<dbReference type="GO" id="GO:0000139">
    <property type="term" value="C:Golgi membrane"/>
    <property type="evidence" value="ECO:0007669"/>
    <property type="project" value="UniProtKB-SubCell"/>
</dbReference>
<dbReference type="GO" id="GO:0015185">
    <property type="term" value="F:gamma-aminobutyric acid transmembrane transporter activity"/>
    <property type="evidence" value="ECO:0000318"/>
    <property type="project" value="GO_Central"/>
</dbReference>
<dbReference type="GO" id="GO:0015203">
    <property type="term" value="F:polyamine transmembrane transporter activity"/>
    <property type="evidence" value="ECO:0000315"/>
    <property type="project" value="SGD"/>
</dbReference>
<dbReference type="GO" id="GO:0015812">
    <property type="term" value="P:gamma-aminobutyric acid transport"/>
    <property type="evidence" value="ECO:0000318"/>
    <property type="project" value="GO_Central"/>
</dbReference>
<dbReference type="GO" id="GO:0015846">
    <property type="term" value="P:polyamine transport"/>
    <property type="evidence" value="ECO:0000315"/>
    <property type="project" value="SGD"/>
</dbReference>
<dbReference type="FunFam" id="1.20.1740.10:FF:000077">
    <property type="entry name" value="Tpo5p"/>
    <property type="match status" value="1"/>
</dbReference>
<dbReference type="Gene3D" id="1.20.1740.10">
    <property type="entry name" value="Amino acid/polyamine transporter I"/>
    <property type="match status" value="1"/>
</dbReference>
<dbReference type="InterPro" id="IPR004841">
    <property type="entry name" value="AA-permease/SLC12A_dom"/>
</dbReference>
<dbReference type="InterPro" id="IPR004840">
    <property type="entry name" value="Amino_acid_permease_CS"/>
</dbReference>
<dbReference type="PANTHER" id="PTHR45649">
    <property type="entry name" value="AMINO-ACID PERMEASE BAT1"/>
    <property type="match status" value="1"/>
</dbReference>
<dbReference type="PANTHER" id="PTHR45649:SF3">
    <property type="entry name" value="POLYAMINE TRANSPORTER TPO5"/>
    <property type="match status" value="1"/>
</dbReference>
<dbReference type="Pfam" id="PF00324">
    <property type="entry name" value="AA_permease"/>
    <property type="match status" value="1"/>
</dbReference>
<dbReference type="PROSITE" id="PS00218">
    <property type="entry name" value="AMINO_ACID_PERMEASE_1"/>
    <property type="match status" value="1"/>
</dbReference>
<protein>
    <recommendedName>
        <fullName>Polyamine transporter TPO5</fullName>
    </recommendedName>
</protein>
<proteinExistence type="evidence at protein level"/>
<feature type="chain" id="PRO_0000054165" description="Polyamine transporter TPO5">
    <location>
        <begin position="1"/>
        <end position="618"/>
    </location>
</feature>
<feature type="topological domain" description="Cytoplasmic" evidence="1">
    <location>
        <begin position="1"/>
        <end position="60"/>
    </location>
</feature>
<feature type="transmembrane region" description="Helical" evidence="1">
    <location>
        <begin position="61"/>
        <end position="84"/>
    </location>
</feature>
<feature type="topological domain" description="Extracellular" evidence="1">
    <location>
        <begin position="85"/>
        <end position="90"/>
    </location>
</feature>
<feature type="transmembrane region" description="Helical" evidence="1">
    <location>
        <begin position="91"/>
        <end position="110"/>
    </location>
</feature>
<feature type="topological domain" description="Cytoplasmic" evidence="1">
    <location>
        <begin position="111"/>
        <end position="131"/>
    </location>
</feature>
<feature type="transmembrane region" description="Helical" evidence="1">
    <location>
        <begin position="132"/>
        <end position="148"/>
    </location>
</feature>
<feature type="topological domain" description="Extracellular" evidence="1">
    <location>
        <begin position="149"/>
        <end position="154"/>
    </location>
</feature>
<feature type="transmembrane region" description="Helical" evidence="1">
    <location>
        <begin position="155"/>
        <end position="171"/>
    </location>
</feature>
<feature type="topological domain" description="Cytoplasmic" evidence="1">
    <location>
        <begin position="172"/>
        <end position="179"/>
    </location>
</feature>
<feature type="transmembrane region" description="Helical" evidence="1">
    <location>
        <begin position="180"/>
        <end position="200"/>
    </location>
</feature>
<feature type="topological domain" description="Extracellular" evidence="1">
    <location>
        <begin position="201"/>
        <end position="211"/>
    </location>
</feature>
<feature type="transmembrane region" description="Helical" evidence="1">
    <location>
        <begin position="212"/>
        <end position="231"/>
    </location>
</feature>
<feature type="topological domain" description="Cytoplasmic" evidence="1">
    <location>
        <begin position="232"/>
        <end position="297"/>
    </location>
</feature>
<feature type="transmembrane region" description="Helical" evidence="1">
    <location>
        <begin position="298"/>
        <end position="317"/>
    </location>
</feature>
<feature type="topological domain" description="Extracellular" evidence="1">
    <location>
        <begin position="318"/>
        <end position="342"/>
    </location>
</feature>
<feature type="transmembrane region" description="Helical" evidence="1">
    <location>
        <begin position="343"/>
        <end position="367"/>
    </location>
</feature>
<feature type="topological domain" description="Cytoplasmic" evidence="1">
    <location>
        <begin position="368"/>
        <end position="402"/>
    </location>
</feature>
<feature type="transmembrane region" description="Helical" evidence="1">
    <location>
        <begin position="403"/>
        <end position="419"/>
    </location>
</feature>
<feature type="topological domain" description="Extracellular" evidence="1">
    <location>
        <begin position="420"/>
        <end position="425"/>
    </location>
</feature>
<feature type="transmembrane region" description="Helical" evidence="1">
    <location>
        <begin position="426"/>
        <end position="449"/>
    </location>
</feature>
<feature type="topological domain" description="Cytoplasmic" evidence="1">
    <location>
        <begin position="450"/>
        <end position="464"/>
    </location>
</feature>
<feature type="transmembrane region" description="Helical" evidence="1">
    <location>
        <begin position="465"/>
        <end position="486"/>
    </location>
</feature>
<feature type="topological domain" description="Extracellular" evidence="1">
    <location>
        <begin position="487"/>
        <end position="498"/>
    </location>
</feature>
<feature type="transmembrane region" description="Helical" evidence="1">
    <location>
        <begin position="499"/>
        <end position="516"/>
    </location>
</feature>
<feature type="topological domain" description="Cytoplasmic" evidence="1">
    <location>
        <begin position="517"/>
        <end position="618"/>
    </location>
</feature>
<feature type="region of interest" description="Disordered" evidence="2">
    <location>
        <begin position="576"/>
        <end position="618"/>
    </location>
</feature>
<feature type="compositionally biased region" description="Basic and acidic residues" evidence="2">
    <location>
        <begin position="598"/>
        <end position="618"/>
    </location>
</feature>
<feature type="modified residue" description="Phosphoserine" evidence="5">
    <location>
        <position position="569"/>
    </location>
</feature>
<accession>P36029</accession>
<accession>D6VX26</accession>
<comment type="function">
    <text evidence="3">Required for polyamine transport. Transports putrescine effectively and spermidine less effectively.</text>
</comment>
<comment type="subcellular location">
    <subcellularLocation>
        <location evidence="3">Golgi apparatus membrane</location>
        <topology evidence="3">Multi-pass membrane protein</topology>
    </subcellularLocation>
</comment>
<comment type="similarity">
    <text evidence="4">Belongs to the amino acid-polyamine-organocation (APC) superfamily.</text>
</comment>
<sequence length="618" mass="69243">MPEYTLLADNIRENIVHFDPNGLFDNLHTIVHEDDSQENEEAEHFNYDQVLDKSLLSRGSIVGLGLGLMSPVLGMCTSMAIGLINGGPLTIMLGFLISGVCIWFSSLSLGEIVSKFPMELHVGSAMLAPEKLKLVCSWYTGWLMLIGNWTMSTSITFAGAQLTISLILMTNSNLISEAHLIFYTVIVFYLVVTVVGLVNLKFARFIETINKVCVYWIIYAIIFIDILLLVFHKGKFRSLKYALFHFDNNLSGYKSAFLSFIIGFQQSNFTLQGFSMLPALADEVKVPEKDIPRGMSNAVLLSAFSGVIFLIPIMLILPDNDLLFTNHKVLPIVNIFTKSTDSVVLSFFLVLLILGNLLFSGIGSITTSSRAVYSFSRDQAIPYYDKWTYVEPDSQSKVPKNSVVLSMIISYFLGLLALISTAAFNAFIGAAVLCLCSATFIPLVLVLFTRRRAIRSAPVKIRYKFGWFINIVSIVWLLLSMVSVCLPTQVPVTFKTMNYALMVYVFCILVITGLYFKWGKYNFRLPLADDIKAPIPSDAEETVFELEDSNVEHTLNSGTTVKESVENNSEEGFIKVHPKSSTENPFEENEENVITDYGDEHHTAEQEFDLADDRRYDI</sequence>
<keyword id="KW-0333">Golgi apparatus</keyword>
<keyword id="KW-0472">Membrane</keyword>
<keyword id="KW-0597">Phosphoprotein</keyword>
<keyword id="KW-1185">Reference proteome</keyword>
<keyword id="KW-0812">Transmembrane</keyword>
<keyword id="KW-1133">Transmembrane helix</keyword>
<keyword id="KW-0813">Transport</keyword>